<proteinExistence type="inferred from homology"/>
<reference key="1">
    <citation type="journal article" date="2007" name="Science">
        <title>Legumes symbioses: absence of nod genes in photosynthetic bradyrhizobia.</title>
        <authorList>
            <person name="Giraud E."/>
            <person name="Moulin L."/>
            <person name="Vallenet D."/>
            <person name="Barbe V."/>
            <person name="Cytryn E."/>
            <person name="Avarre J.-C."/>
            <person name="Jaubert M."/>
            <person name="Simon D."/>
            <person name="Cartieaux F."/>
            <person name="Prin Y."/>
            <person name="Bena G."/>
            <person name="Hannibal L."/>
            <person name="Fardoux J."/>
            <person name="Kojadinovic M."/>
            <person name="Vuillet L."/>
            <person name="Lajus A."/>
            <person name="Cruveiller S."/>
            <person name="Rouy Z."/>
            <person name="Mangenot S."/>
            <person name="Segurens B."/>
            <person name="Dossat C."/>
            <person name="Franck W.L."/>
            <person name="Chang W.-S."/>
            <person name="Saunders E."/>
            <person name="Bruce D."/>
            <person name="Richardson P."/>
            <person name="Normand P."/>
            <person name="Dreyfus B."/>
            <person name="Pignol D."/>
            <person name="Stacey G."/>
            <person name="Emerich D."/>
            <person name="Vermeglio A."/>
            <person name="Medigue C."/>
            <person name="Sadowsky M."/>
        </authorList>
    </citation>
    <scope>NUCLEOTIDE SEQUENCE [LARGE SCALE GENOMIC DNA]</scope>
    <source>
        <strain>BTAi1 / ATCC BAA-1182</strain>
    </source>
</reference>
<organism>
    <name type="scientific">Bradyrhizobium sp. (strain BTAi1 / ATCC BAA-1182)</name>
    <dbReference type="NCBI Taxonomy" id="288000"/>
    <lineage>
        <taxon>Bacteria</taxon>
        <taxon>Pseudomonadati</taxon>
        <taxon>Pseudomonadota</taxon>
        <taxon>Alphaproteobacteria</taxon>
        <taxon>Hyphomicrobiales</taxon>
        <taxon>Nitrobacteraceae</taxon>
        <taxon>Bradyrhizobium</taxon>
    </lineage>
</organism>
<protein>
    <recommendedName>
        <fullName evidence="1">5'-nucleotidase SurE</fullName>
        <ecNumber evidence="1">3.1.3.5</ecNumber>
    </recommendedName>
    <alternativeName>
        <fullName evidence="1">Nucleoside 5'-monophosphate phosphohydrolase</fullName>
    </alternativeName>
</protein>
<gene>
    <name evidence="1" type="primary">surE</name>
    <name type="ordered locus">BBta_4412</name>
</gene>
<name>SURE_BRASB</name>
<comment type="function">
    <text evidence="1">Nucleotidase that shows phosphatase activity on nucleoside 5'-monophosphates.</text>
</comment>
<comment type="catalytic activity">
    <reaction evidence="1">
        <text>a ribonucleoside 5'-phosphate + H2O = a ribonucleoside + phosphate</text>
        <dbReference type="Rhea" id="RHEA:12484"/>
        <dbReference type="ChEBI" id="CHEBI:15377"/>
        <dbReference type="ChEBI" id="CHEBI:18254"/>
        <dbReference type="ChEBI" id="CHEBI:43474"/>
        <dbReference type="ChEBI" id="CHEBI:58043"/>
        <dbReference type="EC" id="3.1.3.5"/>
    </reaction>
</comment>
<comment type="cofactor">
    <cofactor evidence="1">
        <name>a divalent metal cation</name>
        <dbReference type="ChEBI" id="CHEBI:60240"/>
    </cofactor>
    <text evidence="1">Binds 1 divalent metal cation per subunit.</text>
</comment>
<comment type="subcellular location">
    <subcellularLocation>
        <location evidence="1">Cytoplasm</location>
    </subcellularLocation>
</comment>
<comment type="similarity">
    <text evidence="1">Belongs to the SurE nucleotidase family.</text>
</comment>
<sequence>MRILCTNDDGIHAPGLKVIEEIARALSDDVWIVAPELDQSGVSHSLSLNDPLRLREVGPRHFAVRGTPTDCVIMGARHILGAKLPDLVLSGVNKGRNVAEDVVYSGTIAGALEGTILGLPSFALSQEFSIATRDKPSWDTALKFGPQIVRKVLEAGVPRNTVINVNFPACAPDEVKGLVVTRQGKRNLGFLKVDERRDGRGNPYFWIGFDRAAALDVPDEGTDLAALAARYVSVTPLRLDRTDEAFSGKLTTILG</sequence>
<evidence type="ECO:0000255" key="1">
    <source>
        <dbReference type="HAMAP-Rule" id="MF_00060"/>
    </source>
</evidence>
<dbReference type="EC" id="3.1.3.5" evidence="1"/>
<dbReference type="EMBL" id="CP000494">
    <property type="protein sequence ID" value="ABQ36451.1"/>
    <property type="molecule type" value="Genomic_DNA"/>
</dbReference>
<dbReference type="RefSeq" id="WP_012044448.1">
    <property type="nucleotide sequence ID" value="NC_009485.1"/>
</dbReference>
<dbReference type="SMR" id="A5EJV7"/>
<dbReference type="STRING" id="288000.BBta_4412"/>
<dbReference type="KEGG" id="bbt:BBta_4412"/>
<dbReference type="eggNOG" id="COG0496">
    <property type="taxonomic scope" value="Bacteria"/>
</dbReference>
<dbReference type="HOGENOM" id="CLU_045192_1_2_5"/>
<dbReference type="OrthoDB" id="9780815at2"/>
<dbReference type="Proteomes" id="UP000000246">
    <property type="component" value="Chromosome"/>
</dbReference>
<dbReference type="GO" id="GO:0005737">
    <property type="term" value="C:cytoplasm"/>
    <property type="evidence" value="ECO:0007669"/>
    <property type="project" value="UniProtKB-SubCell"/>
</dbReference>
<dbReference type="GO" id="GO:0008254">
    <property type="term" value="F:3'-nucleotidase activity"/>
    <property type="evidence" value="ECO:0007669"/>
    <property type="project" value="TreeGrafter"/>
</dbReference>
<dbReference type="GO" id="GO:0008253">
    <property type="term" value="F:5'-nucleotidase activity"/>
    <property type="evidence" value="ECO:0007669"/>
    <property type="project" value="UniProtKB-UniRule"/>
</dbReference>
<dbReference type="GO" id="GO:0004309">
    <property type="term" value="F:exopolyphosphatase activity"/>
    <property type="evidence" value="ECO:0007669"/>
    <property type="project" value="TreeGrafter"/>
</dbReference>
<dbReference type="GO" id="GO:0046872">
    <property type="term" value="F:metal ion binding"/>
    <property type="evidence" value="ECO:0007669"/>
    <property type="project" value="UniProtKB-UniRule"/>
</dbReference>
<dbReference type="GO" id="GO:0000166">
    <property type="term" value="F:nucleotide binding"/>
    <property type="evidence" value="ECO:0007669"/>
    <property type="project" value="UniProtKB-KW"/>
</dbReference>
<dbReference type="FunFam" id="3.40.1210.10:FF:000001">
    <property type="entry name" value="5'/3'-nucleotidase SurE"/>
    <property type="match status" value="1"/>
</dbReference>
<dbReference type="Gene3D" id="3.40.1210.10">
    <property type="entry name" value="Survival protein SurE-like phosphatase/nucleotidase"/>
    <property type="match status" value="1"/>
</dbReference>
<dbReference type="HAMAP" id="MF_00060">
    <property type="entry name" value="SurE"/>
    <property type="match status" value="1"/>
</dbReference>
<dbReference type="InterPro" id="IPR030048">
    <property type="entry name" value="SurE"/>
</dbReference>
<dbReference type="InterPro" id="IPR002828">
    <property type="entry name" value="SurE-like_Pase/nucleotidase"/>
</dbReference>
<dbReference type="InterPro" id="IPR036523">
    <property type="entry name" value="SurE-like_sf"/>
</dbReference>
<dbReference type="NCBIfam" id="NF001490">
    <property type="entry name" value="PRK00346.1-4"/>
    <property type="match status" value="1"/>
</dbReference>
<dbReference type="NCBIfam" id="TIGR00087">
    <property type="entry name" value="surE"/>
    <property type="match status" value="1"/>
</dbReference>
<dbReference type="PANTHER" id="PTHR30457">
    <property type="entry name" value="5'-NUCLEOTIDASE SURE"/>
    <property type="match status" value="1"/>
</dbReference>
<dbReference type="PANTHER" id="PTHR30457:SF12">
    <property type="entry name" value="5'_3'-NUCLEOTIDASE SURE"/>
    <property type="match status" value="1"/>
</dbReference>
<dbReference type="Pfam" id="PF01975">
    <property type="entry name" value="SurE"/>
    <property type="match status" value="1"/>
</dbReference>
<dbReference type="SUPFAM" id="SSF64167">
    <property type="entry name" value="SurE-like"/>
    <property type="match status" value="1"/>
</dbReference>
<keyword id="KW-0963">Cytoplasm</keyword>
<keyword id="KW-0378">Hydrolase</keyword>
<keyword id="KW-0479">Metal-binding</keyword>
<keyword id="KW-0547">Nucleotide-binding</keyword>
<keyword id="KW-1185">Reference proteome</keyword>
<feature type="chain" id="PRO_1000007704" description="5'-nucleotidase SurE">
    <location>
        <begin position="1"/>
        <end position="255"/>
    </location>
</feature>
<feature type="binding site" evidence="1">
    <location>
        <position position="8"/>
    </location>
    <ligand>
        <name>a divalent metal cation</name>
        <dbReference type="ChEBI" id="CHEBI:60240"/>
    </ligand>
</feature>
<feature type="binding site" evidence="1">
    <location>
        <position position="9"/>
    </location>
    <ligand>
        <name>a divalent metal cation</name>
        <dbReference type="ChEBI" id="CHEBI:60240"/>
    </ligand>
</feature>
<feature type="binding site" evidence="1">
    <location>
        <position position="40"/>
    </location>
    <ligand>
        <name>a divalent metal cation</name>
        <dbReference type="ChEBI" id="CHEBI:60240"/>
    </ligand>
</feature>
<feature type="binding site" evidence="1">
    <location>
        <position position="93"/>
    </location>
    <ligand>
        <name>a divalent metal cation</name>
        <dbReference type="ChEBI" id="CHEBI:60240"/>
    </ligand>
</feature>
<accession>A5EJV7</accession>